<accession>Q2JVR3</accession>
<keyword id="KW-0963">Cytoplasm</keyword>
<keyword id="KW-0378">Hydrolase</keyword>
<keyword id="KW-0479">Metal-binding</keyword>
<keyword id="KW-0547">Nucleotide-binding</keyword>
<evidence type="ECO:0000255" key="1">
    <source>
        <dbReference type="HAMAP-Rule" id="MF_00060"/>
    </source>
</evidence>
<feature type="chain" id="PRO_1000007793" description="5'-nucleotidase SurE">
    <location>
        <begin position="1"/>
        <end position="259"/>
    </location>
</feature>
<feature type="binding site" evidence="1">
    <location>
        <position position="8"/>
    </location>
    <ligand>
        <name>a divalent metal cation</name>
        <dbReference type="ChEBI" id="CHEBI:60240"/>
    </ligand>
</feature>
<feature type="binding site" evidence="1">
    <location>
        <position position="9"/>
    </location>
    <ligand>
        <name>a divalent metal cation</name>
        <dbReference type="ChEBI" id="CHEBI:60240"/>
    </ligand>
</feature>
<feature type="binding site" evidence="1">
    <location>
        <position position="41"/>
    </location>
    <ligand>
        <name>a divalent metal cation</name>
        <dbReference type="ChEBI" id="CHEBI:60240"/>
    </ligand>
</feature>
<feature type="binding site" evidence="1">
    <location>
        <position position="99"/>
    </location>
    <ligand>
        <name>a divalent metal cation</name>
        <dbReference type="ChEBI" id="CHEBI:60240"/>
    </ligand>
</feature>
<dbReference type="EC" id="3.1.3.5" evidence="1"/>
<dbReference type="EMBL" id="CP000239">
    <property type="protein sequence ID" value="ABC99168.1"/>
    <property type="molecule type" value="Genomic_DNA"/>
</dbReference>
<dbReference type="RefSeq" id="WP_011429851.1">
    <property type="nucleotide sequence ID" value="NC_007775.1"/>
</dbReference>
<dbReference type="SMR" id="Q2JVR3"/>
<dbReference type="STRING" id="321327.CYA_0967"/>
<dbReference type="KEGG" id="cya:CYA_0967"/>
<dbReference type="eggNOG" id="COG0496">
    <property type="taxonomic scope" value="Bacteria"/>
</dbReference>
<dbReference type="HOGENOM" id="CLU_045192_1_3_3"/>
<dbReference type="OrthoDB" id="9780815at2"/>
<dbReference type="Proteomes" id="UP000008818">
    <property type="component" value="Chromosome"/>
</dbReference>
<dbReference type="GO" id="GO:0005737">
    <property type="term" value="C:cytoplasm"/>
    <property type="evidence" value="ECO:0007669"/>
    <property type="project" value="UniProtKB-SubCell"/>
</dbReference>
<dbReference type="GO" id="GO:0008254">
    <property type="term" value="F:3'-nucleotidase activity"/>
    <property type="evidence" value="ECO:0007669"/>
    <property type="project" value="TreeGrafter"/>
</dbReference>
<dbReference type="GO" id="GO:0008253">
    <property type="term" value="F:5'-nucleotidase activity"/>
    <property type="evidence" value="ECO:0007669"/>
    <property type="project" value="UniProtKB-UniRule"/>
</dbReference>
<dbReference type="GO" id="GO:0004309">
    <property type="term" value="F:exopolyphosphatase activity"/>
    <property type="evidence" value="ECO:0007669"/>
    <property type="project" value="TreeGrafter"/>
</dbReference>
<dbReference type="GO" id="GO:0046872">
    <property type="term" value="F:metal ion binding"/>
    <property type="evidence" value="ECO:0007669"/>
    <property type="project" value="UniProtKB-UniRule"/>
</dbReference>
<dbReference type="GO" id="GO:0000166">
    <property type="term" value="F:nucleotide binding"/>
    <property type="evidence" value="ECO:0007669"/>
    <property type="project" value="UniProtKB-KW"/>
</dbReference>
<dbReference type="FunFam" id="3.40.1210.10:FF:000001">
    <property type="entry name" value="5'/3'-nucleotidase SurE"/>
    <property type="match status" value="1"/>
</dbReference>
<dbReference type="Gene3D" id="3.40.1210.10">
    <property type="entry name" value="Survival protein SurE-like phosphatase/nucleotidase"/>
    <property type="match status" value="1"/>
</dbReference>
<dbReference type="HAMAP" id="MF_00060">
    <property type="entry name" value="SurE"/>
    <property type="match status" value="1"/>
</dbReference>
<dbReference type="InterPro" id="IPR030048">
    <property type="entry name" value="SurE"/>
</dbReference>
<dbReference type="InterPro" id="IPR002828">
    <property type="entry name" value="SurE-like_Pase/nucleotidase"/>
</dbReference>
<dbReference type="InterPro" id="IPR036523">
    <property type="entry name" value="SurE-like_sf"/>
</dbReference>
<dbReference type="NCBIfam" id="NF001490">
    <property type="entry name" value="PRK00346.1-4"/>
    <property type="match status" value="1"/>
</dbReference>
<dbReference type="NCBIfam" id="NF001492">
    <property type="entry name" value="PRK00346.2-2"/>
    <property type="match status" value="1"/>
</dbReference>
<dbReference type="NCBIfam" id="TIGR00087">
    <property type="entry name" value="surE"/>
    <property type="match status" value="1"/>
</dbReference>
<dbReference type="PANTHER" id="PTHR30457">
    <property type="entry name" value="5'-NUCLEOTIDASE SURE"/>
    <property type="match status" value="1"/>
</dbReference>
<dbReference type="PANTHER" id="PTHR30457:SF12">
    <property type="entry name" value="5'_3'-NUCLEOTIDASE SURE"/>
    <property type="match status" value="1"/>
</dbReference>
<dbReference type="Pfam" id="PF01975">
    <property type="entry name" value="SurE"/>
    <property type="match status" value="1"/>
</dbReference>
<dbReference type="SUPFAM" id="SSF64167">
    <property type="entry name" value="SurE-like"/>
    <property type="match status" value="1"/>
</dbReference>
<name>SURE_SYNJA</name>
<gene>
    <name evidence="1" type="primary">surE</name>
    <name type="ordered locus">CYA_0967</name>
</gene>
<protein>
    <recommendedName>
        <fullName evidence="1">5'-nucleotidase SurE</fullName>
        <ecNumber evidence="1">3.1.3.5</ecNumber>
    </recommendedName>
    <alternativeName>
        <fullName evidence="1">Nucleoside 5'-monophosphate phosphohydrolase</fullName>
    </alternativeName>
</protein>
<sequence length="259" mass="27904">MNILISNDDGIQAAGVRCLAAALAQVGGHQITVVCPDRERSATGHALTLHKPLRVDPVREGFPPEVQAWACSGTPSDCVKLGLDGLLQQPPDWVIAGINQGANLGTDVLYSGTVSAAMEGLLEGIPSLAVSLASFTHQDFQPAAQVVLMLLEKLSLKPLEKPMLLNVNVPPLGLAEIRGMVLARLAWRKYTDLYEKRVDPRGKAYYWLAGEVVEEEVDPCSDVRAVAEGYVSITPLQPDLTAYAAFESLQRWGLSAFGF</sequence>
<organism>
    <name type="scientific">Synechococcus sp. (strain JA-3-3Ab)</name>
    <name type="common">Cyanobacteria bacterium Yellowstone A-Prime</name>
    <dbReference type="NCBI Taxonomy" id="321327"/>
    <lineage>
        <taxon>Bacteria</taxon>
        <taxon>Bacillati</taxon>
        <taxon>Cyanobacteriota</taxon>
        <taxon>Cyanophyceae</taxon>
        <taxon>Synechococcales</taxon>
        <taxon>Synechococcaceae</taxon>
        <taxon>Synechococcus</taxon>
    </lineage>
</organism>
<proteinExistence type="inferred from homology"/>
<reference key="1">
    <citation type="journal article" date="2007" name="ISME J.">
        <title>Population level functional diversity in a microbial community revealed by comparative genomic and metagenomic analyses.</title>
        <authorList>
            <person name="Bhaya D."/>
            <person name="Grossman A.R."/>
            <person name="Steunou A.-S."/>
            <person name="Khuri N."/>
            <person name="Cohan F.M."/>
            <person name="Hamamura N."/>
            <person name="Melendrez M.C."/>
            <person name="Bateson M.M."/>
            <person name="Ward D.M."/>
            <person name="Heidelberg J.F."/>
        </authorList>
    </citation>
    <scope>NUCLEOTIDE SEQUENCE [LARGE SCALE GENOMIC DNA]</scope>
    <source>
        <strain>JA-3-3Ab</strain>
    </source>
</reference>
<comment type="function">
    <text evidence="1">Nucleotidase that shows phosphatase activity on nucleoside 5'-monophosphates.</text>
</comment>
<comment type="catalytic activity">
    <reaction evidence="1">
        <text>a ribonucleoside 5'-phosphate + H2O = a ribonucleoside + phosphate</text>
        <dbReference type="Rhea" id="RHEA:12484"/>
        <dbReference type="ChEBI" id="CHEBI:15377"/>
        <dbReference type="ChEBI" id="CHEBI:18254"/>
        <dbReference type="ChEBI" id="CHEBI:43474"/>
        <dbReference type="ChEBI" id="CHEBI:58043"/>
        <dbReference type="EC" id="3.1.3.5"/>
    </reaction>
</comment>
<comment type="cofactor">
    <cofactor evidence="1">
        <name>a divalent metal cation</name>
        <dbReference type="ChEBI" id="CHEBI:60240"/>
    </cofactor>
    <text evidence="1">Binds 1 divalent metal cation per subunit.</text>
</comment>
<comment type="subcellular location">
    <subcellularLocation>
        <location evidence="1">Cytoplasm</location>
    </subcellularLocation>
</comment>
<comment type="similarity">
    <text evidence="1">Belongs to the SurE nucleotidase family.</text>
</comment>